<keyword id="KW-0903">Direct protein sequencing</keyword>
<keyword id="KW-1015">Disulfide bond</keyword>
<keyword id="KW-0378">Hydrolase</keyword>
<keyword id="KW-0959">Myotoxin</keyword>
<keyword id="KW-0964">Secreted</keyword>
<keyword id="KW-0732">Signal</keyword>
<keyword id="KW-0800">Toxin</keyword>
<protein>
    <recommendedName>
        <fullName>Basic phospholipase A2 PeBP(R)-I/II</fullName>
        <shortName>svPLA2</shortName>
        <ecNumber>3.1.1.4</ecNumber>
    </recommendedName>
    <alternativeName>
        <fullName>Phosphatidylcholine 2-acylhydrolase</fullName>
    </alternativeName>
</protein>
<reference key="1">
    <citation type="journal article" date="2006" name="Toxicon">
        <title>Discovery of novel [Arg49]phospholipase A2 isozymes from Protobothrops elegans venom and regional evolution of Crotalinae snake venom phospholipase A2 isozymes in the southwestern islands of Japan and Taiwan.</title>
        <authorList>
            <person name="Chijiwa T."/>
            <person name="Tokunaga E."/>
            <person name="Ikeda R."/>
            <person name="Terada K."/>
            <person name="Ogawa T."/>
            <person name="Oda-Ueda N."/>
            <person name="Hattori S."/>
            <person name="Nozaki M."/>
            <person name="Ohno M."/>
        </authorList>
    </citation>
    <scope>NUCLEOTIDE SEQUENCE [MRNA]</scope>
    <scope>PROTEIN SEQUENCE OF 17-63</scope>
    <scope>FUNCTION</scope>
    <source>
        <tissue>Venom</tissue>
        <tissue>Venom gland</tissue>
    </source>
</reference>
<proteinExistence type="evidence at protein level"/>
<comment type="function">
    <text evidence="4">Snake venom phospholipases A2 that have myotoxic, and edema-inducing activity, as well as extremely weak lipolytic activity. PLA2 catalyzes the calcium-dependent hydrolysis of the 2-acyl groups in 3-sn-phosphoglycerides.</text>
</comment>
<comment type="catalytic activity">
    <reaction evidence="2 3">
        <text>a 1,2-diacyl-sn-glycero-3-phosphocholine + H2O = a 1-acyl-sn-glycero-3-phosphocholine + a fatty acid + H(+)</text>
        <dbReference type="Rhea" id="RHEA:15801"/>
        <dbReference type="ChEBI" id="CHEBI:15377"/>
        <dbReference type="ChEBI" id="CHEBI:15378"/>
        <dbReference type="ChEBI" id="CHEBI:28868"/>
        <dbReference type="ChEBI" id="CHEBI:57643"/>
        <dbReference type="ChEBI" id="CHEBI:58168"/>
        <dbReference type="EC" id="3.1.1.4"/>
    </reaction>
</comment>
<comment type="subcellular location">
    <subcellularLocation>
        <location>Secreted</location>
    </subcellularLocation>
</comment>
<comment type="tissue specificity">
    <text>Expressed by the venom gland.</text>
</comment>
<comment type="miscellaneous">
    <text>The sequence shown is that of PeBP(R)-I. PeBP(R)-II differs at two positions.</text>
</comment>
<comment type="miscellaneous">
    <text evidence="6">Negative results: does not show hemorrhagic activity.</text>
</comment>
<comment type="similarity">
    <text evidence="5">Belongs to the phospholipase A2 family. Group II subfamily. R49 sub-subfamily.</text>
</comment>
<dbReference type="EC" id="3.1.1.4"/>
<dbReference type="EMBL" id="AB219806">
    <property type="protein sequence ID" value="BAE72889.1"/>
    <property type="molecule type" value="mRNA"/>
</dbReference>
<dbReference type="EMBL" id="AB219807">
    <property type="protein sequence ID" value="BAE72890.1"/>
    <property type="molecule type" value="mRNA"/>
</dbReference>
<dbReference type="SMR" id="Q2PG81"/>
<dbReference type="GO" id="GO:0005576">
    <property type="term" value="C:extracellular region"/>
    <property type="evidence" value="ECO:0007669"/>
    <property type="project" value="UniProtKB-SubCell"/>
</dbReference>
<dbReference type="GO" id="GO:0005509">
    <property type="term" value="F:calcium ion binding"/>
    <property type="evidence" value="ECO:0007669"/>
    <property type="project" value="InterPro"/>
</dbReference>
<dbReference type="GO" id="GO:0047498">
    <property type="term" value="F:calcium-dependent phospholipase A2 activity"/>
    <property type="evidence" value="ECO:0007669"/>
    <property type="project" value="TreeGrafter"/>
</dbReference>
<dbReference type="GO" id="GO:0005543">
    <property type="term" value="F:phospholipid binding"/>
    <property type="evidence" value="ECO:0007669"/>
    <property type="project" value="TreeGrafter"/>
</dbReference>
<dbReference type="GO" id="GO:0090729">
    <property type="term" value="F:toxin activity"/>
    <property type="evidence" value="ECO:0007669"/>
    <property type="project" value="UniProtKB-KW"/>
</dbReference>
<dbReference type="GO" id="GO:0050482">
    <property type="term" value="P:arachidonate secretion"/>
    <property type="evidence" value="ECO:0007669"/>
    <property type="project" value="InterPro"/>
</dbReference>
<dbReference type="GO" id="GO:0016042">
    <property type="term" value="P:lipid catabolic process"/>
    <property type="evidence" value="ECO:0007669"/>
    <property type="project" value="InterPro"/>
</dbReference>
<dbReference type="GO" id="GO:0006644">
    <property type="term" value="P:phospholipid metabolic process"/>
    <property type="evidence" value="ECO:0007669"/>
    <property type="project" value="InterPro"/>
</dbReference>
<dbReference type="CDD" id="cd00125">
    <property type="entry name" value="PLA2c"/>
    <property type="match status" value="1"/>
</dbReference>
<dbReference type="FunFam" id="1.20.90.10:FF:000001">
    <property type="entry name" value="Basic phospholipase A2 homolog"/>
    <property type="match status" value="1"/>
</dbReference>
<dbReference type="Gene3D" id="1.20.90.10">
    <property type="entry name" value="Phospholipase A2 domain"/>
    <property type="match status" value="1"/>
</dbReference>
<dbReference type="InterPro" id="IPR001211">
    <property type="entry name" value="PLipase_A2"/>
</dbReference>
<dbReference type="InterPro" id="IPR033112">
    <property type="entry name" value="PLipase_A2_Asp_AS"/>
</dbReference>
<dbReference type="InterPro" id="IPR016090">
    <property type="entry name" value="PLipase_A2_dom"/>
</dbReference>
<dbReference type="InterPro" id="IPR036444">
    <property type="entry name" value="PLipase_A2_dom_sf"/>
</dbReference>
<dbReference type="InterPro" id="IPR033113">
    <property type="entry name" value="PLipase_A2_His_AS"/>
</dbReference>
<dbReference type="PANTHER" id="PTHR11716:SF101">
    <property type="entry name" value="BASIC PHOSPHOLIPASE A2 PA-11-LIKE"/>
    <property type="match status" value="1"/>
</dbReference>
<dbReference type="PANTHER" id="PTHR11716">
    <property type="entry name" value="PHOSPHOLIPASE A2 FAMILY MEMBER"/>
    <property type="match status" value="1"/>
</dbReference>
<dbReference type="Pfam" id="PF00068">
    <property type="entry name" value="Phospholip_A2_1"/>
    <property type="match status" value="1"/>
</dbReference>
<dbReference type="PRINTS" id="PR00389">
    <property type="entry name" value="PHPHLIPASEA2"/>
</dbReference>
<dbReference type="SMART" id="SM00085">
    <property type="entry name" value="PA2c"/>
    <property type="match status" value="1"/>
</dbReference>
<dbReference type="SUPFAM" id="SSF48619">
    <property type="entry name" value="Phospholipase A2, PLA2"/>
    <property type="match status" value="1"/>
</dbReference>
<dbReference type="PROSITE" id="PS00119">
    <property type="entry name" value="PA2_ASP"/>
    <property type="match status" value="1"/>
</dbReference>
<dbReference type="PROSITE" id="PS00118">
    <property type="entry name" value="PA2_HIS"/>
    <property type="match status" value="1"/>
</dbReference>
<name>PA2B1_PROEL</name>
<accession>Q2PG81</accession>
<accession>Q2PG82</accession>
<sequence>MRTLWIMAVLLLGVEGSLVELWKMVFQETGKEAVKNYGLYGCNCGVGKRGKPVDATDRCCFVHRCCYKKVTGCDPKKDRYSYSWENKAIVCGEKNPCLKQVCECDKAVAICLRENLGTYNKNHRVTVKFLCKAPESC</sequence>
<evidence type="ECO:0000250" key="1"/>
<evidence type="ECO:0000255" key="2">
    <source>
        <dbReference type="PROSITE-ProRule" id="PRU10035"/>
    </source>
</evidence>
<evidence type="ECO:0000255" key="3">
    <source>
        <dbReference type="PROSITE-ProRule" id="PRU10036"/>
    </source>
</evidence>
<evidence type="ECO:0000269" key="4">
    <source>
    </source>
</evidence>
<evidence type="ECO:0000305" key="5"/>
<evidence type="ECO:0000305" key="6">
    <source>
    </source>
</evidence>
<feature type="signal peptide" evidence="4">
    <location>
        <begin position="1"/>
        <end position="16"/>
    </location>
</feature>
<feature type="chain" id="PRO_0000419050" description="Basic phospholipase A2 PeBP(R)-I/II">
    <location>
        <begin position="17"/>
        <end position="137"/>
    </location>
</feature>
<feature type="active site" evidence="1">
    <location>
        <position position="63"/>
    </location>
</feature>
<feature type="active site" evidence="1">
    <location>
        <position position="105"/>
    </location>
</feature>
<feature type="disulfide bond" evidence="1">
    <location>
        <begin position="42"/>
        <end position="131"/>
    </location>
</feature>
<feature type="disulfide bond" evidence="1">
    <location>
        <begin position="44"/>
        <end position="60"/>
    </location>
</feature>
<feature type="disulfide bond" evidence="1">
    <location>
        <begin position="59"/>
        <end position="111"/>
    </location>
</feature>
<feature type="disulfide bond" evidence="1">
    <location>
        <begin position="65"/>
        <end position="137"/>
    </location>
</feature>
<feature type="disulfide bond" evidence="1">
    <location>
        <begin position="66"/>
        <end position="104"/>
    </location>
</feature>
<feature type="disulfide bond" evidence="1">
    <location>
        <begin position="73"/>
        <end position="97"/>
    </location>
</feature>
<feature type="disulfide bond" evidence="1">
    <location>
        <begin position="91"/>
        <end position="102"/>
    </location>
</feature>
<feature type="sequence variant" description="In PeBP(R)-II.">
    <original>V</original>
    <variation>I</variation>
    <location>
        <position position="19"/>
    </location>
</feature>
<organism>
    <name type="scientific">Protobothrops elegans</name>
    <name type="common">Elegant pitviper</name>
    <name type="synonym">Trimeresurus elegans</name>
    <dbReference type="NCBI Taxonomy" id="88086"/>
    <lineage>
        <taxon>Eukaryota</taxon>
        <taxon>Metazoa</taxon>
        <taxon>Chordata</taxon>
        <taxon>Craniata</taxon>
        <taxon>Vertebrata</taxon>
        <taxon>Euteleostomi</taxon>
        <taxon>Lepidosauria</taxon>
        <taxon>Squamata</taxon>
        <taxon>Bifurcata</taxon>
        <taxon>Unidentata</taxon>
        <taxon>Episquamata</taxon>
        <taxon>Toxicofera</taxon>
        <taxon>Serpentes</taxon>
        <taxon>Colubroidea</taxon>
        <taxon>Viperidae</taxon>
        <taxon>Crotalinae</taxon>
        <taxon>Protobothrops</taxon>
    </lineage>
</organism>